<name>CTRA_CAUVC</name>
<comment type="function">
    <text>Forms part of a two-component regulatory system CtrA/CckA that controls multiple events in the cell cycle, including cell division, stalk synthesis and cell cycle-specific transcription. Binds to a group of cell cycle-regulated promoters critical for DNA replication, DNA methylation, and class II flagellar biogenesis.</text>
</comment>
<comment type="PTM">
    <text evidence="3">Phosphorylated by CckA.</text>
</comment>
<organism>
    <name type="scientific">Caulobacter vibrioides (strain ATCC 19089 / CIP 103742 / CB 15)</name>
    <name type="common">Caulobacter crescentus</name>
    <dbReference type="NCBI Taxonomy" id="190650"/>
    <lineage>
        <taxon>Bacteria</taxon>
        <taxon>Pseudomonadati</taxon>
        <taxon>Pseudomonadota</taxon>
        <taxon>Alphaproteobacteria</taxon>
        <taxon>Caulobacterales</taxon>
        <taxon>Caulobacteraceae</taxon>
        <taxon>Caulobacter</taxon>
    </lineage>
</organism>
<proteinExistence type="inferred from homology"/>
<dbReference type="EMBL" id="AE005673">
    <property type="protein sequence ID" value="AAK24997.1"/>
    <property type="molecule type" value="Genomic_DNA"/>
</dbReference>
<dbReference type="EMBL" id="AF021339">
    <property type="protein sequence ID" value="AAC05479.1"/>
    <property type="molecule type" value="Genomic_DNA"/>
</dbReference>
<dbReference type="PIR" id="A87625">
    <property type="entry name" value="A87625"/>
</dbReference>
<dbReference type="RefSeq" id="NP_421829.1">
    <property type="nucleotide sequence ID" value="NC_002696.2"/>
</dbReference>
<dbReference type="RefSeq" id="WP_010920871.1">
    <property type="nucleotide sequence ID" value="NC_002696.2"/>
</dbReference>
<dbReference type="SMR" id="P0CAW8"/>
<dbReference type="DIP" id="DIP-60565N"/>
<dbReference type="IntAct" id="P0CAW8">
    <property type="interactions" value="3"/>
</dbReference>
<dbReference type="STRING" id="190650.CC_3035"/>
<dbReference type="EnsemblBacteria" id="AAK24997">
    <property type="protein sequence ID" value="AAK24997"/>
    <property type="gene ID" value="CC_3035"/>
</dbReference>
<dbReference type="KEGG" id="ccr:CC_3035"/>
<dbReference type="PATRIC" id="fig|190650.5.peg.3039"/>
<dbReference type="eggNOG" id="COG0745">
    <property type="taxonomic scope" value="Bacteria"/>
</dbReference>
<dbReference type="HOGENOM" id="CLU_000445_30_1_5"/>
<dbReference type="BioCyc" id="CAULO:CC3035-MONOMER"/>
<dbReference type="CD-CODE" id="907141DD">
    <property type="entry name" value="PopZ condensate"/>
</dbReference>
<dbReference type="Proteomes" id="UP000001816">
    <property type="component" value="Chromosome"/>
</dbReference>
<dbReference type="CollecTF" id="EXPREG_000008c0"/>
<dbReference type="GO" id="GO:0005829">
    <property type="term" value="C:cytosol"/>
    <property type="evidence" value="ECO:0007669"/>
    <property type="project" value="TreeGrafter"/>
</dbReference>
<dbReference type="GO" id="GO:0032993">
    <property type="term" value="C:protein-DNA complex"/>
    <property type="evidence" value="ECO:0000315"/>
    <property type="project" value="CollecTF"/>
</dbReference>
<dbReference type="GO" id="GO:0001216">
    <property type="term" value="F:DNA-binding transcription activator activity"/>
    <property type="evidence" value="ECO:0000353"/>
    <property type="project" value="CollecTF"/>
</dbReference>
<dbReference type="GO" id="GO:0001217">
    <property type="term" value="F:DNA-binding transcription repressor activity"/>
    <property type="evidence" value="ECO:0000353"/>
    <property type="project" value="CollecTF"/>
</dbReference>
<dbReference type="GO" id="GO:0000156">
    <property type="term" value="F:phosphorelay response regulator activity"/>
    <property type="evidence" value="ECO:0007669"/>
    <property type="project" value="TreeGrafter"/>
</dbReference>
<dbReference type="GO" id="GO:0043565">
    <property type="term" value="F:sequence-specific DNA binding"/>
    <property type="evidence" value="ECO:0000315"/>
    <property type="project" value="CollecTF"/>
</dbReference>
<dbReference type="GO" id="GO:0000976">
    <property type="term" value="F:transcription cis-regulatory region binding"/>
    <property type="evidence" value="ECO:0000315"/>
    <property type="project" value="CollecTF"/>
</dbReference>
<dbReference type="CDD" id="cd17616">
    <property type="entry name" value="REC_OmpR_CtrA"/>
    <property type="match status" value="1"/>
</dbReference>
<dbReference type="CDD" id="cd00383">
    <property type="entry name" value="trans_reg_C"/>
    <property type="match status" value="1"/>
</dbReference>
<dbReference type="FunFam" id="1.10.10.10:FF:000052">
    <property type="entry name" value="Cell cycle response regulator"/>
    <property type="match status" value="1"/>
</dbReference>
<dbReference type="FunFam" id="3.40.50.2300:FF:000270">
    <property type="entry name" value="Two-component system response regulator"/>
    <property type="match status" value="1"/>
</dbReference>
<dbReference type="Gene3D" id="3.40.50.2300">
    <property type="match status" value="1"/>
</dbReference>
<dbReference type="Gene3D" id="1.10.10.10">
    <property type="entry name" value="Winged helix-like DNA-binding domain superfamily/Winged helix DNA-binding domain"/>
    <property type="match status" value="1"/>
</dbReference>
<dbReference type="InterPro" id="IPR011006">
    <property type="entry name" value="CheY-like_superfamily"/>
</dbReference>
<dbReference type="InterPro" id="IPR001867">
    <property type="entry name" value="OmpR/PhoB-type_DNA-bd"/>
</dbReference>
<dbReference type="InterPro" id="IPR001789">
    <property type="entry name" value="Sig_transdc_resp-reg_receiver"/>
</dbReference>
<dbReference type="InterPro" id="IPR039420">
    <property type="entry name" value="WalR-like"/>
</dbReference>
<dbReference type="InterPro" id="IPR036388">
    <property type="entry name" value="WH-like_DNA-bd_sf"/>
</dbReference>
<dbReference type="NCBIfam" id="NF045991">
    <property type="entry name" value="RespRegCtrARhodob"/>
    <property type="match status" value="1"/>
</dbReference>
<dbReference type="PANTHER" id="PTHR48111">
    <property type="entry name" value="REGULATOR OF RPOS"/>
    <property type="match status" value="1"/>
</dbReference>
<dbReference type="PANTHER" id="PTHR48111:SF22">
    <property type="entry name" value="REGULATOR OF RPOS"/>
    <property type="match status" value="1"/>
</dbReference>
<dbReference type="Pfam" id="PF00072">
    <property type="entry name" value="Response_reg"/>
    <property type="match status" value="1"/>
</dbReference>
<dbReference type="Pfam" id="PF00486">
    <property type="entry name" value="Trans_reg_C"/>
    <property type="match status" value="1"/>
</dbReference>
<dbReference type="SMART" id="SM00448">
    <property type="entry name" value="REC"/>
    <property type="match status" value="1"/>
</dbReference>
<dbReference type="SMART" id="SM00862">
    <property type="entry name" value="Trans_reg_C"/>
    <property type="match status" value="1"/>
</dbReference>
<dbReference type="SUPFAM" id="SSF52172">
    <property type="entry name" value="CheY-like"/>
    <property type="match status" value="1"/>
</dbReference>
<dbReference type="PROSITE" id="PS51755">
    <property type="entry name" value="OMPR_PHOB"/>
    <property type="match status" value="1"/>
</dbReference>
<dbReference type="PROSITE" id="PS50110">
    <property type="entry name" value="RESPONSE_REGULATORY"/>
    <property type="match status" value="1"/>
</dbReference>
<gene>
    <name type="primary">ctrA</name>
    <name type="synonym">sokA</name>
    <name type="ordered locus">CC_3035</name>
</gene>
<evidence type="ECO:0000255" key="1">
    <source>
        <dbReference type="PROSITE-ProRule" id="PRU00169"/>
    </source>
</evidence>
<evidence type="ECO:0000255" key="2">
    <source>
        <dbReference type="PROSITE-ProRule" id="PRU01091"/>
    </source>
</evidence>
<evidence type="ECO:0000305" key="3"/>
<feature type="chain" id="PRO_0000081084" description="Cell cycle transcriptional regulator CtrA">
    <location>
        <begin position="1"/>
        <end position="231"/>
    </location>
</feature>
<feature type="domain" description="Response regulatory" evidence="1">
    <location>
        <begin position="2"/>
        <end position="116"/>
    </location>
</feature>
<feature type="DNA-binding region" description="OmpR/PhoB-type" evidence="2">
    <location>
        <begin position="124"/>
        <end position="223"/>
    </location>
</feature>
<feature type="modified residue" description="4-aspartylphosphate" evidence="1">
    <location>
        <position position="51"/>
    </location>
</feature>
<reference key="1">
    <citation type="journal article" date="2001" name="Proc. Natl. Acad. Sci. U.S.A.">
        <title>Complete genome sequence of Caulobacter crescentus.</title>
        <authorList>
            <person name="Nierman W.C."/>
            <person name="Feldblyum T.V."/>
            <person name="Laub M.T."/>
            <person name="Paulsen I.T."/>
            <person name="Nelson K.E."/>
            <person name="Eisen J.A."/>
            <person name="Heidelberg J.F."/>
            <person name="Alley M.R.K."/>
            <person name="Ohta N."/>
            <person name="Maddock J.R."/>
            <person name="Potocka I."/>
            <person name="Nelson W.C."/>
            <person name="Newton A."/>
            <person name="Stephens C."/>
            <person name="Phadke N.D."/>
            <person name="Ely B."/>
            <person name="DeBoy R.T."/>
            <person name="Dodson R.J."/>
            <person name="Durkin A.S."/>
            <person name="Gwinn M.L."/>
            <person name="Haft D.H."/>
            <person name="Kolonay J.F."/>
            <person name="Smit J."/>
            <person name="Craven M.B."/>
            <person name="Khouri H.M."/>
            <person name="Shetty J."/>
            <person name="Berry K.J."/>
            <person name="Utterback T.R."/>
            <person name="Tran K."/>
            <person name="Wolf A.M."/>
            <person name="Vamathevan J.J."/>
            <person name="Ermolaeva M.D."/>
            <person name="White O."/>
            <person name="Salzberg S.L."/>
            <person name="Venter J.C."/>
            <person name="Shapiro L."/>
            <person name="Fraser C.M."/>
        </authorList>
    </citation>
    <scope>NUCLEOTIDE SEQUENCE [LARGE SCALE GENOMIC DNA]</scope>
    <source>
        <strain>ATCC 19089 / CIP 103742 / CB 15</strain>
    </source>
</reference>
<reference key="2">
    <citation type="journal article" date="1998" name="Proc. Natl. Acad. Sci. U.S.A.">
        <title>An essential, multicomponent signal transduction pathway required for cell cycle regulation in Caulobacter.</title>
        <authorList>
            <person name="Wu J."/>
            <person name="Ohta N."/>
            <person name="Newton A."/>
        </authorList>
    </citation>
    <scope>NUCLEOTIDE SEQUENCE [GENOMIC DNA] OF 159-231</scope>
    <source>
        <strain>ATCC 19089 / CIP 103742 / CB 15</strain>
    </source>
</reference>
<keyword id="KW-0238">DNA-binding</keyword>
<keyword id="KW-0597">Phosphoprotein</keyword>
<keyword id="KW-1185">Reference proteome</keyword>
<keyword id="KW-0804">Transcription</keyword>
<keyword id="KW-0805">Transcription regulation</keyword>
<keyword id="KW-0902">Two-component regulatory system</keyword>
<accession>P0CAW8</accession>
<accession>Q45994</accession>
<protein>
    <recommendedName>
        <fullName>Cell cycle transcriptional regulator CtrA</fullName>
    </recommendedName>
    <alternativeName>
        <fullName>Response regulator SokA</fullName>
    </alternativeName>
</protein>
<sequence>MRVLLIEDDSATAQTIELMLKSEGFNVYTTDLGEEGVDLGKIYDYDLILLDLNLPDMSGIDVLRTLRVAKINTPIMILSGSSEIDTKVKTFAGGADDYMTKPFHKDEMIARIHAVVRRSKGHAQSVIKTGDIVVNLDAKTVEVNGNRVHLTGKEYQMLELLSLRKGTTLTKEMFLNHLYGGMDEPELKIIDVFICKLRKKLAASAHGKHHIETVWGRGYVLRDPNEQVNAA</sequence>